<feature type="chain" id="PRO_0000213476" description="Uncharacterized protein D2007.2">
    <location>
        <begin position="1"/>
        <end position="195"/>
    </location>
</feature>
<feature type="domain" description="MSP" evidence="1">
    <location>
        <begin position="76"/>
        <end position="184"/>
    </location>
</feature>
<feature type="region of interest" description="Disordered" evidence="2">
    <location>
        <begin position="1"/>
        <end position="35"/>
    </location>
</feature>
<feature type="compositionally biased region" description="Low complexity" evidence="2">
    <location>
        <begin position="20"/>
        <end position="30"/>
    </location>
</feature>
<sequence length="195" mass="21357">MASSSSAALRPFGTARLTPGRQTGRQTQQQISAPEPMIAIALSDMEYLMRSARSSRSSGRSERQPGCTCCCHIAAGVTVIPRVARFSIEGGLSTHTLMNHSDNRIAVKITCSDNNMYRVTPVYATVEPGQSLPLHIARITSDLIKRDRLCVNILEADGNKEAREIFKKNANTRAPASINMALEATNDNQNHHHQE</sequence>
<name>YLM2_CAEEL</name>
<proteinExistence type="predicted"/>
<gene>
    <name type="ORF">D2007.2</name>
</gene>
<protein>
    <recommendedName>
        <fullName>Uncharacterized protein D2007.2</fullName>
    </recommendedName>
</protein>
<reference key="1">
    <citation type="journal article" date="1994" name="Nature">
        <title>2.2 Mb of contiguous nucleotide sequence from chromosome III of C. elegans.</title>
        <authorList>
            <person name="Wilson R."/>
            <person name="Ainscough R."/>
            <person name="Anderson K."/>
            <person name="Baynes C."/>
            <person name="Berks M."/>
            <person name="Bonfield J."/>
            <person name="Burton J."/>
            <person name="Connell M."/>
            <person name="Copsey T."/>
            <person name="Cooper J."/>
            <person name="Coulson A."/>
            <person name="Craxton M."/>
            <person name="Dear S."/>
            <person name="Du Z."/>
            <person name="Durbin R."/>
            <person name="Favello A."/>
            <person name="Fraser A."/>
            <person name="Fulton L."/>
            <person name="Gardner A."/>
            <person name="Green P."/>
            <person name="Hawkins T."/>
            <person name="Hillier L."/>
            <person name="Jier M."/>
            <person name="Johnston L."/>
            <person name="Jones M."/>
            <person name="Kershaw J."/>
            <person name="Kirsten J."/>
            <person name="Laisster N."/>
            <person name="Latreille P."/>
            <person name="Lightning J."/>
            <person name="Lloyd C."/>
            <person name="Mortimore B."/>
            <person name="O'Callaghan M."/>
            <person name="Parsons J."/>
            <person name="Percy C."/>
            <person name="Rifken L."/>
            <person name="Roopra A."/>
            <person name="Saunders D."/>
            <person name="Shownkeen R."/>
            <person name="Sims M."/>
            <person name="Smaldon N."/>
            <person name="Smith A."/>
            <person name="Smith M."/>
            <person name="Sonnhammer E."/>
            <person name="Staden R."/>
            <person name="Sulston J."/>
            <person name="Thierry-Mieg J."/>
            <person name="Thomas K."/>
            <person name="Vaudin M."/>
            <person name="Vaughan K."/>
            <person name="Waterston R."/>
            <person name="Watson A."/>
            <person name="Weinstock L."/>
            <person name="Wilkinson-Sproat J."/>
            <person name="Wohldman P."/>
        </authorList>
    </citation>
    <scope>NUCLEOTIDE SEQUENCE [LARGE SCALE GENOMIC DNA]</scope>
    <source>
        <strain>Bristol N2</strain>
    </source>
</reference>
<reference key="2">
    <citation type="journal article" date="1998" name="Science">
        <title>Genome sequence of the nematode C. elegans: a platform for investigating biology.</title>
        <authorList>
            <consortium name="The C. elegans sequencing consortium"/>
        </authorList>
    </citation>
    <scope>NUCLEOTIDE SEQUENCE [LARGE SCALE GENOMIC DNA]</scope>
    <source>
        <strain>Bristol N2</strain>
    </source>
</reference>
<organism>
    <name type="scientific">Caenorhabditis elegans</name>
    <dbReference type="NCBI Taxonomy" id="6239"/>
    <lineage>
        <taxon>Eukaryota</taxon>
        <taxon>Metazoa</taxon>
        <taxon>Ecdysozoa</taxon>
        <taxon>Nematoda</taxon>
        <taxon>Chromadorea</taxon>
        <taxon>Rhabditida</taxon>
        <taxon>Rhabditina</taxon>
        <taxon>Rhabditomorpha</taxon>
        <taxon>Rhabditoidea</taxon>
        <taxon>Rhabditidae</taxon>
        <taxon>Peloderinae</taxon>
        <taxon>Caenorhabditis</taxon>
    </lineage>
</organism>
<keyword id="KW-1185">Reference proteome</keyword>
<evidence type="ECO:0000255" key="1">
    <source>
        <dbReference type="PROSITE-ProRule" id="PRU00132"/>
    </source>
</evidence>
<evidence type="ECO:0000256" key="2">
    <source>
        <dbReference type="SAM" id="MobiDB-lite"/>
    </source>
</evidence>
<accession>P34376</accession>
<dbReference type="EMBL" id="FO080532">
    <property type="protein sequence ID" value="CCD64447.1"/>
    <property type="molecule type" value="Genomic_DNA"/>
</dbReference>
<dbReference type="PIR" id="S44788">
    <property type="entry name" value="S44788"/>
</dbReference>
<dbReference type="RefSeq" id="NP_001367503.1">
    <property type="nucleotide sequence ID" value="NM_001379822.2"/>
</dbReference>
<dbReference type="RefSeq" id="NP_498780.1">
    <property type="nucleotide sequence ID" value="NM_066379.1"/>
</dbReference>
<dbReference type="SMR" id="P34376"/>
<dbReference type="BioGRID" id="48744">
    <property type="interactions" value="1"/>
</dbReference>
<dbReference type="FunCoup" id="P34376">
    <property type="interactions" value="20"/>
</dbReference>
<dbReference type="IntAct" id="P34376">
    <property type="interactions" value="1"/>
</dbReference>
<dbReference type="STRING" id="6239.D2007.2b.1"/>
<dbReference type="PaxDb" id="6239-D2007.2"/>
<dbReference type="EnsemblMetazoa" id="D2007.2a.1">
    <property type="protein sequence ID" value="D2007.2a.1"/>
    <property type="gene ID" value="WBGene00017042"/>
</dbReference>
<dbReference type="EnsemblMetazoa" id="D2007.2a.2">
    <property type="protein sequence ID" value="D2007.2a.2"/>
    <property type="gene ID" value="WBGene00017042"/>
</dbReference>
<dbReference type="EnsemblMetazoa" id="D2007.2a.3">
    <property type="protein sequence ID" value="D2007.2a.3"/>
    <property type="gene ID" value="WBGene00017042"/>
</dbReference>
<dbReference type="GeneID" id="183938"/>
<dbReference type="UCSC" id="D2007.2">
    <property type="organism name" value="c. elegans"/>
</dbReference>
<dbReference type="AGR" id="WB:WBGene00017042"/>
<dbReference type="WormBase" id="D2007.2a">
    <property type="protein sequence ID" value="CE00127"/>
    <property type="gene ID" value="WBGene00017042"/>
</dbReference>
<dbReference type="eggNOG" id="ENOG502TGMU">
    <property type="taxonomic scope" value="Eukaryota"/>
</dbReference>
<dbReference type="HOGENOM" id="CLU_1397484_0_0_1"/>
<dbReference type="InParanoid" id="P34376"/>
<dbReference type="OMA" id="GCTCCCH"/>
<dbReference type="PhylomeDB" id="P34376"/>
<dbReference type="PRO" id="PR:P34376"/>
<dbReference type="Proteomes" id="UP000001940">
    <property type="component" value="Chromosome III"/>
</dbReference>
<dbReference type="Bgee" id="WBGene00017042">
    <property type="expression patterns" value="Expressed in larva and 3 other cell types or tissues"/>
</dbReference>
<dbReference type="ExpressionAtlas" id="P34376">
    <property type="expression patterns" value="baseline and differential"/>
</dbReference>
<dbReference type="Gene3D" id="2.60.40.10">
    <property type="entry name" value="Immunoglobulins"/>
    <property type="match status" value="1"/>
</dbReference>
<dbReference type="InterPro" id="IPR013783">
    <property type="entry name" value="Ig-like_fold"/>
</dbReference>
<dbReference type="InterPro" id="IPR000535">
    <property type="entry name" value="MSP_dom"/>
</dbReference>
<dbReference type="InterPro" id="IPR008962">
    <property type="entry name" value="PapD-like_sf"/>
</dbReference>
<dbReference type="InterPro" id="IPR051774">
    <property type="entry name" value="Sperm-specific_class_P"/>
</dbReference>
<dbReference type="PANTHER" id="PTHR22947">
    <property type="entry name" value="MAJOR SPERM PROTEIN"/>
    <property type="match status" value="1"/>
</dbReference>
<dbReference type="PANTHER" id="PTHR22947:SF1">
    <property type="entry name" value="PROTEIN CBG16675"/>
    <property type="match status" value="1"/>
</dbReference>
<dbReference type="Pfam" id="PF00635">
    <property type="entry name" value="Motile_Sperm"/>
    <property type="match status" value="1"/>
</dbReference>
<dbReference type="SUPFAM" id="SSF49354">
    <property type="entry name" value="PapD-like"/>
    <property type="match status" value="1"/>
</dbReference>
<dbReference type="PROSITE" id="PS50202">
    <property type="entry name" value="MSP"/>
    <property type="match status" value="1"/>
</dbReference>